<keyword id="KW-0997">Cell inner membrane</keyword>
<keyword id="KW-1003">Cell membrane</keyword>
<keyword id="KW-0441">Lipid A biosynthesis</keyword>
<keyword id="KW-0444">Lipid biosynthesis</keyword>
<keyword id="KW-0443">Lipid metabolism</keyword>
<keyword id="KW-0448">Lipopolysaccharide biosynthesis</keyword>
<keyword id="KW-0472">Membrane</keyword>
<keyword id="KW-1185">Reference proteome</keyword>
<keyword id="KW-0812">Transmembrane</keyword>
<keyword id="KW-1133">Transmembrane helix</keyword>
<keyword id="KW-0813">Transport</keyword>
<evidence type="ECO:0000255" key="1">
    <source>
        <dbReference type="HAMAP-Rule" id="MF_00538"/>
    </source>
</evidence>
<protein>
    <recommendedName>
        <fullName evidence="1">Probable 4-amino-4-deoxy-L-arabinose-phosphoundecaprenol flippase subunit ArnF</fullName>
        <shortName evidence="1">L-Ara4N-phosphoundecaprenol flippase subunit ArnF</shortName>
    </recommendedName>
    <alternativeName>
        <fullName evidence="1">Undecaprenyl phosphate-aminoarabinose flippase subunit ArnF</fullName>
    </alternativeName>
</protein>
<proteinExistence type="inferred from homology"/>
<reference key="1">
    <citation type="submission" date="2007-08" db="EMBL/GenBank/DDBJ databases">
        <title>Complete sequence of Shewanella sediminis HAW-EB3.</title>
        <authorList>
            <consortium name="US DOE Joint Genome Institute"/>
            <person name="Copeland A."/>
            <person name="Lucas S."/>
            <person name="Lapidus A."/>
            <person name="Barry K."/>
            <person name="Glavina del Rio T."/>
            <person name="Dalin E."/>
            <person name="Tice H."/>
            <person name="Pitluck S."/>
            <person name="Chertkov O."/>
            <person name="Brettin T."/>
            <person name="Bruce D."/>
            <person name="Detter J.C."/>
            <person name="Han C."/>
            <person name="Schmutz J."/>
            <person name="Larimer F."/>
            <person name="Land M."/>
            <person name="Hauser L."/>
            <person name="Kyrpides N."/>
            <person name="Kim E."/>
            <person name="Zhao J.-S."/>
            <person name="Richardson P."/>
        </authorList>
    </citation>
    <scope>NUCLEOTIDE SEQUENCE [LARGE SCALE GENOMIC DNA]</scope>
    <source>
        <strain>HAW-EB3</strain>
    </source>
</reference>
<organism>
    <name type="scientific">Shewanella sediminis (strain HAW-EB3)</name>
    <dbReference type="NCBI Taxonomy" id="425104"/>
    <lineage>
        <taxon>Bacteria</taxon>
        <taxon>Pseudomonadati</taxon>
        <taxon>Pseudomonadota</taxon>
        <taxon>Gammaproteobacteria</taxon>
        <taxon>Alteromonadales</taxon>
        <taxon>Shewanellaceae</taxon>
        <taxon>Shewanella</taxon>
    </lineage>
</organism>
<sequence length="145" mass="15984">MAHLTLSIRGLLLALMSVLLISVAQLSMKWGMGTLNQLWSDLVMLWQGEDYSSLFSQALAPVMAVGAGLFCYALSMACWVMALKRLPLSIAYPLLSLSYVLVYLGAVYLPWLNEPLSWVKGTGIFLILLGLIFVLPKKNQTSDKS</sequence>
<comment type="function">
    <text evidence="1">Translocates 4-amino-4-deoxy-L-arabinose-phosphoundecaprenol (alpha-L-Ara4N-phosphoundecaprenol) from the cytoplasmic to the periplasmic side of the inner membrane.</text>
</comment>
<comment type="pathway">
    <text evidence="1">Bacterial outer membrane biogenesis; lipopolysaccharide biosynthesis.</text>
</comment>
<comment type="subunit">
    <text evidence="1">Heterodimer of ArnE and ArnF.</text>
</comment>
<comment type="subcellular location">
    <subcellularLocation>
        <location evidence="1">Cell inner membrane</location>
        <topology evidence="1">Multi-pass membrane protein</topology>
    </subcellularLocation>
</comment>
<comment type="similarity">
    <text evidence="1">Belongs to the ArnF family.</text>
</comment>
<feature type="chain" id="PRO_0000382017" description="Probable 4-amino-4-deoxy-L-arabinose-phosphoundecaprenol flippase subunit ArnF">
    <location>
        <begin position="1"/>
        <end position="145"/>
    </location>
</feature>
<feature type="topological domain" description="Cytoplasmic" evidence="1">
    <location>
        <begin position="1"/>
        <end position="3"/>
    </location>
</feature>
<feature type="transmembrane region" description="Helical" evidence="1">
    <location>
        <begin position="4"/>
        <end position="24"/>
    </location>
</feature>
<feature type="topological domain" description="Periplasmic" evidence="1">
    <location>
        <begin position="25"/>
        <end position="61"/>
    </location>
</feature>
<feature type="transmembrane region" description="Helical" evidence="1">
    <location>
        <begin position="62"/>
        <end position="82"/>
    </location>
</feature>
<feature type="topological domain" description="Cytoplasmic" evidence="1">
    <location>
        <begin position="83"/>
        <end position="89"/>
    </location>
</feature>
<feature type="transmembrane region" description="Helical" evidence="1">
    <location>
        <begin position="90"/>
        <end position="110"/>
    </location>
</feature>
<feature type="topological domain" description="Periplasmic" evidence="1">
    <location>
        <begin position="111"/>
        <end position="114"/>
    </location>
</feature>
<feature type="transmembrane region" description="Helical" evidence="1">
    <location>
        <begin position="115"/>
        <end position="135"/>
    </location>
</feature>
<feature type="topological domain" description="Cytoplasmic" evidence="1">
    <location>
        <begin position="136"/>
        <end position="145"/>
    </location>
</feature>
<dbReference type="EMBL" id="CP000821">
    <property type="protein sequence ID" value="ABV35531.1"/>
    <property type="molecule type" value="Genomic_DNA"/>
</dbReference>
<dbReference type="RefSeq" id="WP_012141267.1">
    <property type="nucleotide sequence ID" value="NC_009831.1"/>
</dbReference>
<dbReference type="STRING" id="425104.Ssed_0920"/>
<dbReference type="KEGG" id="sse:Ssed_0920"/>
<dbReference type="eggNOG" id="COG2076">
    <property type="taxonomic scope" value="Bacteria"/>
</dbReference>
<dbReference type="HOGENOM" id="CLU_131462_1_0_6"/>
<dbReference type="OrthoDB" id="5592809at2"/>
<dbReference type="UniPathway" id="UPA00030"/>
<dbReference type="Proteomes" id="UP000002015">
    <property type="component" value="Chromosome"/>
</dbReference>
<dbReference type="GO" id="GO:0005886">
    <property type="term" value="C:plasma membrane"/>
    <property type="evidence" value="ECO:0007669"/>
    <property type="project" value="UniProtKB-SubCell"/>
</dbReference>
<dbReference type="GO" id="GO:1901505">
    <property type="term" value="F:carbohydrate derivative transmembrane transporter activity"/>
    <property type="evidence" value="ECO:0007669"/>
    <property type="project" value="InterPro"/>
</dbReference>
<dbReference type="GO" id="GO:0009245">
    <property type="term" value="P:lipid A biosynthetic process"/>
    <property type="evidence" value="ECO:0007669"/>
    <property type="project" value="UniProtKB-UniRule"/>
</dbReference>
<dbReference type="GO" id="GO:0009103">
    <property type="term" value="P:lipopolysaccharide biosynthetic process"/>
    <property type="evidence" value="ECO:0007669"/>
    <property type="project" value="UniProtKB-UniRule"/>
</dbReference>
<dbReference type="Gene3D" id="1.10.3730.20">
    <property type="match status" value="1"/>
</dbReference>
<dbReference type="HAMAP" id="MF_00538">
    <property type="entry name" value="Flippase_ArnF"/>
    <property type="match status" value="1"/>
</dbReference>
<dbReference type="InterPro" id="IPR022832">
    <property type="entry name" value="Flippase_ArnF"/>
</dbReference>
<dbReference type="InterPro" id="IPR000390">
    <property type="entry name" value="Small_drug/metabolite_transptr"/>
</dbReference>
<dbReference type="NCBIfam" id="NF002816">
    <property type="entry name" value="PRK02971.1-2"/>
    <property type="match status" value="1"/>
</dbReference>
<dbReference type="PANTHER" id="PTHR30561:SF9">
    <property type="entry name" value="4-AMINO-4-DEOXY-L-ARABINOSE-PHOSPHOUNDECAPRENOL FLIPPASE SUBUNIT ARNF-RELATED"/>
    <property type="match status" value="1"/>
</dbReference>
<dbReference type="PANTHER" id="PTHR30561">
    <property type="entry name" value="SMR FAMILY PROTON-DEPENDENT DRUG EFFLUX TRANSPORTER SUGE"/>
    <property type="match status" value="1"/>
</dbReference>
<dbReference type="SUPFAM" id="SSF103481">
    <property type="entry name" value="Multidrug resistance efflux transporter EmrE"/>
    <property type="match status" value="1"/>
</dbReference>
<name>ARNF_SHESH</name>
<gene>
    <name evidence="1" type="primary">arnF</name>
    <name type="ordered locus">Ssed_0920</name>
</gene>
<accession>A8FRQ8</accession>